<protein>
    <recommendedName>
        <fullName>Homeobox protein Hox-A10</fullName>
    </recommendedName>
</protein>
<proteinExistence type="inferred from homology"/>
<organism>
    <name type="scientific">Morone saxatilis</name>
    <name type="common">Striped bass</name>
    <name type="synonym">Perca saxatilis</name>
    <dbReference type="NCBI Taxonomy" id="34816"/>
    <lineage>
        <taxon>Eukaryota</taxon>
        <taxon>Metazoa</taxon>
        <taxon>Chordata</taxon>
        <taxon>Craniata</taxon>
        <taxon>Vertebrata</taxon>
        <taxon>Euteleostomi</taxon>
        <taxon>Actinopterygii</taxon>
        <taxon>Neopterygii</taxon>
        <taxon>Teleostei</taxon>
        <taxon>Neoteleostei</taxon>
        <taxon>Acanthomorphata</taxon>
        <taxon>Eupercaria</taxon>
        <taxon>Moronidae</taxon>
        <taxon>Morone</taxon>
    </lineage>
</organism>
<evidence type="ECO:0000250" key="1"/>
<evidence type="ECO:0000255" key="2">
    <source>
        <dbReference type="PROSITE-ProRule" id="PRU00108"/>
    </source>
</evidence>
<evidence type="ECO:0000256" key="3">
    <source>
        <dbReference type="SAM" id="MobiDB-lite"/>
    </source>
</evidence>
<evidence type="ECO:0000305" key="4"/>
<reference key="1">
    <citation type="journal article" date="1999" name="J. Exp. Zool.">
        <title>Genomic organization of the Hoxa4-Hoxa10 region from Morone saxatilis: implications for Hox gene evolution among vertebrates.</title>
        <authorList>
            <person name="Snell E.A."/>
            <person name="Scemama J.L."/>
            <person name="Stellwag E.J."/>
        </authorList>
    </citation>
    <scope>NUCLEOTIDE SEQUENCE [GENOMIC DNA]</scope>
</reference>
<feature type="chain" id="PRO_0000200094" description="Homeobox protein Hox-A10">
    <location>
        <begin position="1"/>
        <end position="289"/>
    </location>
</feature>
<feature type="DNA-binding region" description="Homeobox" evidence="2">
    <location>
        <begin position="215"/>
        <end position="274"/>
    </location>
</feature>
<feature type="region of interest" description="Disordered" evidence="3">
    <location>
        <begin position="103"/>
        <end position="218"/>
    </location>
</feature>
<feature type="compositionally biased region" description="Polar residues" evidence="3">
    <location>
        <begin position="103"/>
        <end position="117"/>
    </location>
</feature>
<feature type="compositionally biased region" description="Low complexity" evidence="3">
    <location>
        <begin position="132"/>
        <end position="143"/>
    </location>
</feature>
<feature type="compositionally biased region" description="Basic and acidic residues" evidence="3">
    <location>
        <begin position="187"/>
        <end position="203"/>
    </location>
</feature>
<sequence>MSSMEMWMDAQRSCRMDQEHPVGPQVAPCSFPQNIKEESTYCLYEQPKCPKASTAEDLTYSRLTTTGLGSSTCTVTDGGGGGGGGSVPVPGYFRLSQTHAHSHKLYNTNGPQPNPSHSHFGLHPTAPARFHTPPTSTSTPATAQEGRNTEEPVSSGNADLQPHAAPGTEEARESSDAEVSSADETEEHDKERQAKSTKGDTKSENTANWLTAKSGRKKRCPYTKHQTLELEKEFLFNMYLTRERRLEISKSVHLTDRQVKIWFQNRRMKLKKMTRENRIRELTSNYGFS</sequence>
<keyword id="KW-0217">Developmental protein</keyword>
<keyword id="KW-0238">DNA-binding</keyword>
<keyword id="KW-0371">Homeobox</keyword>
<keyword id="KW-0539">Nucleus</keyword>
<keyword id="KW-0804">Transcription</keyword>
<keyword id="KW-0805">Transcription regulation</keyword>
<accession>Q9PWD6</accession>
<comment type="function">
    <text evidence="1">Sequence-specific transcription factor which is part of a developmental regulatory system that provides cells with specific positional identities on the anterior-posterior axis.</text>
</comment>
<comment type="subcellular location">
    <subcellularLocation>
        <location evidence="2">Nucleus</location>
    </subcellularLocation>
</comment>
<comment type="similarity">
    <text evidence="4">Belongs to the Abd-B homeobox family.</text>
</comment>
<name>HXA10_MORSA</name>
<gene>
    <name type="primary">hoxa10</name>
</gene>
<dbReference type="EMBL" id="AF089743">
    <property type="protein sequence ID" value="AAD46395.1"/>
    <property type="molecule type" value="Genomic_DNA"/>
</dbReference>
<dbReference type="SMR" id="Q9PWD6"/>
<dbReference type="GO" id="GO:0005634">
    <property type="term" value="C:nucleus"/>
    <property type="evidence" value="ECO:0007669"/>
    <property type="project" value="UniProtKB-SubCell"/>
</dbReference>
<dbReference type="GO" id="GO:0000981">
    <property type="term" value="F:DNA-binding transcription factor activity, RNA polymerase II-specific"/>
    <property type="evidence" value="ECO:0007669"/>
    <property type="project" value="InterPro"/>
</dbReference>
<dbReference type="GO" id="GO:0000978">
    <property type="term" value="F:RNA polymerase II cis-regulatory region sequence-specific DNA binding"/>
    <property type="evidence" value="ECO:0007669"/>
    <property type="project" value="TreeGrafter"/>
</dbReference>
<dbReference type="CDD" id="cd00086">
    <property type="entry name" value="homeodomain"/>
    <property type="match status" value="1"/>
</dbReference>
<dbReference type="FunFam" id="1.10.10.60:FF:000018">
    <property type="entry name" value="Homeobox A10"/>
    <property type="match status" value="1"/>
</dbReference>
<dbReference type="Gene3D" id="1.10.10.60">
    <property type="entry name" value="Homeodomain-like"/>
    <property type="match status" value="1"/>
</dbReference>
<dbReference type="InterPro" id="IPR001356">
    <property type="entry name" value="HD"/>
</dbReference>
<dbReference type="InterPro" id="IPR020479">
    <property type="entry name" value="HD_metazoa"/>
</dbReference>
<dbReference type="InterPro" id="IPR017970">
    <property type="entry name" value="Homeobox_CS"/>
</dbReference>
<dbReference type="InterPro" id="IPR009057">
    <property type="entry name" value="Homeodomain-like_sf"/>
</dbReference>
<dbReference type="InterPro" id="IPR046333">
    <property type="entry name" value="HXA10/ABDB-like"/>
</dbReference>
<dbReference type="PANTHER" id="PTHR45874">
    <property type="entry name" value="HOMEOBOX PROTEIN ABDOMINAL-B"/>
    <property type="match status" value="1"/>
</dbReference>
<dbReference type="PANTHER" id="PTHR45874:SF1">
    <property type="entry name" value="HOMEOBOX PROTEIN HOX-A10"/>
    <property type="match status" value="1"/>
</dbReference>
<dbReference type="Pfam" id="PF00046">
    <property type="entry name" value="Homeodomain"/>
    <property type="match status" value="1"/>
</dbReference>
<dbReference type="PRINTS" id="PR00024">
    <property type="entry name" value="HOMEOBOX"/>
</dbReference>
<dbReference type="SMART" id="SM00389">
    <property type="entry name" value="HOX"/>
    <property type="match status" value="1"/>
</dbReference>
<dbReference type="SUPFAM" id="SSF46689">
    <property type="entry name" value="Homeodomain-like"/>
    <property type="match status" value="1"/>
</dbReference>
<dbReference type="PROSITE" id="PS00027">
    <property type="entry name" value="HOMEOBOX_1"/>
    <property type="match status" value="1"/>
</dbReference>
<dbReference type="PROSITE" id="PS50071">
    <property type="entry name" value="HOMEOBOX_2"/>
    <property type="match status" value="1"/>
</dbReference>